<organism>
    <name type="scientific">Vibrio vulnificus (strain YJ016)</name>
    <dbReference type="NCBI Taxonomy" id="196600"/>
    <lineage>
        <taxon>Bacteria</taxon>
        <taxon>Pseudomonadati</taxon>
        <taxon>Pseudomonadota</taxon>
        <taxon>Gammaproteobacteria</taxon>
        <taxon>Vibrionales</taxon>
        <taxon>Vibrionaceae</taxon>
        <taxon>Vibrio</taxon>
    </lineage>
</organism>
<name>LPOA_VIBVY</name>
<evidence type="ECO:0000250" key="1"/>
<evidence type="ECO:0000255" key="2">
    <source>
        <dbReference type="PROSITE-ProRule" id="PRU00303"/>
    </source>
</evidence>
<evidence type="ECO:0000305" key="3"/>
<proteinExistence type="inferred from homology"/>
<accession>Q7MNW1</accession>
<dbReference type="EMBL" id="BA000037">
    <property type="protein sequence ID" value="BAC93368.1"/>
    <property type="molecule type" value="Genomic_DNA"/>
</dbReference>
<dbReference type="RefSeq" id="WP_011149497.1">
    <property type="nucleotide sequence ID" value="NC_005139.1"/>
</dbReference>
<dbReference type="SMR" id="Q7MNW1"/>
<dbReference type="STRING" id="672.VV93_v1c05460"/>
<dbReference type="KEGG" id="vvy:VV0604"/>
<dbReference type="PATRIC" id="fig|196600.6.peg.623"/>
<dbReference type="eggNOG" id="COG3107">
    <property type="taxonomic scope" value="Bacteria"/>
</dbReference>
<dbReference type="HOGENOM" id="CLU_026091_1_0_6"/>
<dbReference type="Proteomes" id="UP000002675">
    <property type="component" value="Chromosome I"/>
</dbReference>
<dbReference type="GO" id="GO:0031241">
    <property type="term" value="C:periplasmic side of cell outer membrane"/>
    <property type="evidence" value="ECO:0007669"/>
    <property type="project" value="UniProtKB-UniRule"/>
</dbReference>
<dbReference type="GO" id="GO:0030234">
    <property type="term" value="F:enzyme regulator activity"/>
    <property type="evidence" value="ECO:0007669"/>
    <property type="project" value="UniProtKB-UniRule"/>
</dbReference>
<dbReference type="GO" id="GO:0009252">
    <property type="term" value="P:peptidoglycan biosynthetic process"/>
    <property type="evidence" value="ECO:0007669"/>
    <property type="project" value="UniProtKB-UniRule"/>
</dbReference>
<dbReference type="GO" id="GO:0008360">
    <property type="term" value="P:regulation of cell shape"/>
    <property type="evidence" value="ECO:0007669"/>
    <property type="project" value="UniProtKB-KW"/>
</dbReference>
<dbReference type="CDD" id="cd06339">
    <property type="entry name" value="PBP1_YraM_LppC_lipoprotein-like"/>
    <property type="match status" value="1"/>
</dbReference>
<dbReference type="Gene3D" id="1.25.40.650">
    <property type="match status" value="1"/>
</dbReference>
<dbReference type="Gene3D" id="3.40.50.2300">
    <property type="match status" value="2"/>
</dbReference>
<dbReference type="Gene3D" id="1.25.40.10">
    <property type="entry name" value="Tetratricopeptide repeat domain"/>
    <property type="match status" value="1"/>
</dbReference>
<dbReference type="InterPro" id="IPR007443">
    <property type="entry name" value="LpoA"/>
</dbReference>
<dbReference type="InterPro" id="IPR028082">
    <property type="entry name" value="Peripla_BP_I"/>
</dbReference>
<dbReference type="InterPro" id="IPR011990">
    <property type="entry name" value="TPR-like_helical_dom_sf"/>
</dbReference>
<dbReference type="PANTHER" id="PTHR38038">
    <property type="entry name" value="PENICILLIN-BINDING PROTEIN ACTIVATOR LPOA"/>
    <property type="match status" value="1"/>
</dbReference>
<dbReference type="PANTHER" id="PTHR38038:SF1">
    <property type="entry name" value="PENICILLIN-BINDING PROTEIN ACTIVATOR LPOA"/>
    <property type="match status" value="1"/>
</dbReference>
<dbReference type="Pfam" id="PF04348">
    <property type="entry name" value="LppC"/>
    <property type="match status" value="1"/>
</dbReference>
<dbReference type="SUPFAM" id="SSF53822">
    <property type="entry name" value="Periplasmic binding protein-like I"/>
    <property type="match status" value="1"/>
</dbReference>
<dbReference type="PROSITE" id="PS51257">
    <property type="entry name" value="PROKAR_LIPOPROTEIN"/>
    <property type="match status" value="1"/>
</dbReference>
<reference key="1">
    <citation type="journal article" date="2003" name="Genome Res.">
        <title>Comparative genome analysis of Vibrio vulnificus, a marine pathogen.</title>
        <authorList>
            <person name="Chen C.-Y."/>
            <person name="Wu K.-M."/>
            <person name="Chang Y.-C."/>
            <person name="Chang C.-H."/>
            <person name="Tsai H.-C."/>
            <person name="Liao T.-L."/>
            <person name="Liu Y.-M."/>
            <person name="Chen H.-J."/>
            <person name="Shen A.B.-T."/>
            <person name="Li J.-C."/>
            <person name="Su T.-L."/>
            <person name="Shao C.-P."/>
            <person name="Lee C.-T."/>
            <person name="Hor L.-I."/>
            <person name="Tsai S.-F."/>
        </authorList>
    </citation>
    <scope>NUCLEOTIDE SEQUENCE [LARGE SCALE GENOMIC DNA]</scope>
    <source>
        <strain>YJ016</strain>
    </source>
</reference>
<gene>
    <name type="primary">lpoA</name>
    <name type="ordered locus">VV0604</name>
</gene>
<keyword id="KW-0998">Cell outer membrane</keyword>
<keyword id="KW-0133">Cell shape</keyword>
<keyword id="KW-0449">Lipoprotein</keyword>
<keyword id="KW-0472">Membrane</keyword>
<keyword id="KW-0564">Palmitate</keyword>
<keyword id="KW-0573">Peptidoglycan synthesis</keyword>
<keyword id="KW-0732">Signal</keyword>
<sequence>MMNPKRLSVPRLLTPVALAITLAACSSGPKTPTSVDITLEPTLSVQNYMINADSSEGSLQADWLIMAAKAALQNGDLAQADLLIKRLARMPLSEVQQAEWQLTRAAYHLKLNQADNVIELLNFKAWWKLPNEQWKDYYTLRVEAYTALQQPFEANRQLVTLSQYVDESQQAEIAQQIWANFTGYSQYEITQLHPDASEEVLDGWLQLAIYMKTMSANVPQLKNTLEHWFAENTAHPAALYTPAEIQSILDLEIVQPVHTALLLPLSGKYAKQAQLIRDGFIFAMMNDKDRDPEATLKVIDTNLYQPHQLKQQLTDEQIDFIVGPLRKDVIEVLQGELSDDSGQVSIPSLALNIPDELQTGTGICYLTLSPEQEVAQAAKHLFANGYKYPLIFAPQGNLGQRVVSAFEAEWKKYSTNKVAVSYFGDKRQLQRDVNSVFGLQESQQRIAQMEGLMKLPMETQPRSRRDIDSVYIAARSSELTLIKPFIEVAVNPDAKPPKLFSNSMSNSGEKQYEDLTGIVYSDIPMLLEVNPALDSQMEQLWPDQSNFQKRLQALGMDAYKLMAELPQMKVVPNHAVNGQTGVLTIDDQCVVHREISWKEHGAL</sequence>
<protein>
    <recommendedName>
        <fullName>Penicillin-binding protein activator LpoA</fullName>
        <shortName>PBP activator LpoA</shortName>
    </recommendedName>
</protein>
<feature type="signal peptide" evidence="2">
    <location>
        <begin position="1"/>
        <end position="24"/>
    </location>
</feature>
<feature type="chain" id="PRO_0000405952" description="Penicillin-binding protein activator LpoA">
    <location>
        <begin position="25"/>
        <end position="603"/>
    </location>
</feature>
<feature type="lipid moiety-binding region" description="N-palmitoyl cysteine" evidence="2">
    <location>
        <position position="25"/>
    </location>
</feature>
<feature type="lipid moiety-binding region" description="S-diacylglycerol cysteine" evidence="2">
    <location>
        <position position="25"/>
    </location>
</feature>
<comment type="function">
    <text evidence="1">Regulator of peptidoglycan synthesis that is essential for the function of penicillin-binding protein 1A (PBP1a).</text>
</comment>
<comment type="subunit">
    <text evidence="1">Interacts with PBP1a.</text>
</comment>
<comment type="subcellular location">
    <subcellularLocation>
        <location evidence="1">Cell outer membrane</location>
        <topology evidence="2">Lipid-anchor</topology>
        <orientation evidence="1">Periplasmic side</orientation>
    </subcellularLocation>
</comment>
<comment type="similarity">
    <text evidence="3">Belongs to the LpoA family.</text>
</comment>